<organism>
    <name type="scientific">Penicillium parvum</name>
    <name type="common">Eupenicillium parvum</name>
    <dbReference type="NCBI Taxonomy" id="70113"/>
    <lineage>
        <taxon>Eukaryota</taxon>
        <taxon>Fungi</taxon>
        <taxon>Dikarya</taxon>
        <taxon>Ascomycota</taxon>
        <taxon>Pezizomycotina</taxon>
        <taxon>Eurotiomycetes</taxon>
        <taxon>Eurotiomycetidae</taxon>
        <taxon>Eurotiales</taxon>
        <taxon>Aspergillaceae</taxon>
        <taxon>Penicillium</taxon>
    </lineage>
</organism>
<accession>A0A2U7R6V5</accession>
<dbReference type="EC" id="3.2.1.8" evidence="4"/>
<dbReference type="EMBL" id="MF682064">
    <property type="protein sequence ID" value="AVA16959.1"/>
    <property type="molecule type" value="mRNA"/>
</dbReference>
<dbReference type="SMR" id="A0A2U7R6V5"/>
<dbReference type="UniPathway" id="UPA00114"/>
<dbReference type="GO" id="GO:0005576">
    <property type="term" value="C:extracellular region"/>
    <property type="evidence" value="ECO:0007669"/>
    <property type="project" value="UniProtKB-SubCell"/>
</dbReference>
<dbReference type="GO" id="GO:0031176">
    <property type="term" value="F:endo-1,4-beta-xylanase activity"/>
    <property type="evidence" value="ECO:0007669"/>
    <property type="project" value="UniProtKB-EC"/>
</dbReference>
<dbReference type="GO" id="GO:0045493">
    <property type="term" value="P:xylan catabolic process"/>
    <property type="evidence" value="ECO:0007669"/>
    <property type="project" value="UniProtKB-UniPathway"/>
</dbReference>
<dbReference type="FunFam" id="2.60.120.180:FF:000001">
    <property type="entry name" value="Endo-1,4-beta-xylanase"/>
    <property type="match status" value="1"/>
</dbReference>
<dbReference type="Gene3D" id="2.60.120.180">
    <property type="match status" value="1"/>
</dbReference>
<dbReference type="InterPro" id="IPR013320">
    <property type="entry name" value="ConA-like_dom_sf"/>
</dbReference>
<dbReference type="InterPro" id="IPR013319">
    <property type="entry name" value="GH11/12"/>
</dbReference>
<dbReference type="InterPro" id="IPR018208">
    <property type="entry name" value="GH11_AS_1"/>
</dbReference>
<dbReference type="InterPro" id="IPR033119">
    <property type="entry name" value="GH11_AS_2"/>
</dbReference>
<dbReference type="InterPro" id="IPR033123">
    <property type="entry name" value="GH11_dom"/>
</dbReference>
<dbReference type="InterPro" id="IPR001137">
    <property type="entry name" value="Glyco_hydro_11"/>
</dbReference>
<dbReference type="PANTHER" id="PTHR46828">
    <property type="entry name" value="ENDO-1,4-BETA-XYLANASE A-RELATED"/>
    <property type="match status" value="1"/>
</dbReference>
<dbReference type="PANTHER" id="PTHR46828:SF2">
    <property type="entry name" value="ENDO-1,4-BETA-XYLANASE A-RELATED"/>
    <property type="match status" value="1"/>
</dbReference>
<dbReference type="Pfam" id="PF00457">
    <property type="entry name" value="Glyco_hydro_11"/>
    <property type="match status" value="1"/>
</dbReference>
<dbReference type="PRINTS" id="PR00911">
    <property type="entry name" value="GLHYDRLASE11"/>
</dbReference>
<dbReference type="SUPFAM" id="SSF49899">
    <property type="entry name" value="Concanavalin A-like lectins/glucanases"/>
    <property type="match status" value="1"/>
</dbReference>
<dbReference type="PROSITE" id="PS00776">
    <property type="entry name" value="GH11_1"/>
    <property type="match status" value="1"/>
</dbReference>
<dbReference type="PROSITE" id="PS00777">
    <property type="entry name" value="GH11_2"/>
    <property type="match status" value="1"/>
</dbReference>
<dbReference type="PROSITE" id="PS51761">
    <property type="entry name" value="GH11_3"/>
    <property type="match status" value="1"/>
</dbReference>
<name>XYN3_PENPR</name>
<sequence length="220" mass="23442">MFSFTSVIALLSAGIVASASPTAIEERSLTSSSTGYSGGYYYSFWTDGSGNVVYNNGNAGEYSVTWSGNAGNFVAGKGWNPGSERSVTYSGSFNPNGNGYLSVYGWMTNPLVEYYIVESYGTYNPGSSATHKGTVTSDGGTYDIYVDQRVNAPSIQGTATFNQYWSIRQQKRVGGTVTTANHFNAWQKAGLQLGSFSDGAYMIVATEGYQSSGSSDITVH</sequence>
<protein>
    <recommendedName>
        <fullName evidence="5">Endo-1,4-beta-xylanase 3</fullName>
        <shortName evidence="5">Xylanase 3</shortName>
        <ecNumber evidence="4">3.2.1.8</ecNumber>
    </recommendedName>
    <alternativeName>
        <fullName evidence="5">1,4-beta-D-xylan xylanohydrolase 3</fullName>
    </alternativeName>
</protein>
<reference key="1">
    <citation type="journal article" date="2018" name="Appl. Biochem. Biotechnol.">
        <title>Characterization of two new endo-beta-1,4-xylanases from Eupenicillium parvum 4-14 and their applications for production of feruloylated oligosaccharides.</title>
        <authorList>
            <person name="Long L."/>
            <person name="Xu M."/>
            <person name="Shi Y."/>
            <person name="Lin Q."/>
            <person name="Wang J."/>
            <person name="Ding S."/>
        </authorList>
    </citation>
    <scope>NUCLEOTIDE SEQUENCE [MRNA]</scope>
    <scope>FUNCTION</scope>
    <scope>SUBCELLULAR LOCATION</scope>
    <scope>CATALYTIC ACTIVITY</scope>
    <scope>BIOPHYSICOCHEMICAL PROPERTIES</scope>
    <scope>ACTIVITY REGULATION</scope>
    <scope>BIOTECHNOLOGY</scope>
    <source>
        <strain>CCTCC M2015404 / 4-14</strain>
    </source>
</reference>
<reference key="2">
    <citation type="journal article" date="2016" name="J. Appl. Microbiol.">
        <title>Thermotolerant hemicellulolytic and cellulolytic enzymes from Eupenicillium parvum 4-14 display high efficiency upon release of ferulic acid from wheat bran.</title>
        <authorList>
            <person name="Long L."/>
            <person name="Ding D."/>
            <person name="Han Z."/>
            <person name="Zhao H."/>
            <person name="Lin Q."/>
            <person name="Ding S."/>
        </authorList>
    </citation>
    <scope>FUNCTION</scope>
</reference>
<feature type="signal peptide" evidence="1">
    <location>
        <begin position="1"/>
        <end position="19"/>
    </location>
</feature>
<feature type="chain" id="PRO_5015885029" description="Endo-1,4-beta-xylanase 3">
    <location>
        <begin position="20"/>
        <end position="220"/>
    </location>
</feature>
<feature type="domain" description="GH11" evidence="2">
    <location>
        <begin position="28"/>
        <end position="220"/>
    </location>
</feature>
<feature type="active site" description="Nucleophile" evidence="2">
    <location>
        <position position="113"/>
    </location>
</feature>
<feature type="active site" description="Proton donor" evidence="2">
    <location>
        <position position="207"/>
    </location>
</feature>
<gene>
    <name evidence="5" type="primary">XYN3</name>
</gene>
<keyword id="KW-0119">Carbohydrate metabolism</keyword>
<keyword id="KW-0326">Glycosidase</keyword>
<keyword id="KW-0378">Hydrolase</keyword>
<keyword id="KW-0624">Polysaccharide degradation</keyword>
<keyword id="KW-0964">Secreted</keyword>
<keyword id="KW-0732">Signal</keyword>
<keyword id="KW-0858">Xylan degradation</keyword>
<evidence type="ECO:0000255" key="1"/>
<evidence type="ECO:0000255" key="2">
    <source>
        <dbReference type="PROSITE-ProRule" id="PRU01097"/>
    </source>
</evidence>
<evidence type="ECO:0000269" key="3">
    <source>
    </source>
</evidence>
<evidence type="ECO:0000269" key="4">
    <source>
    </source>
</evidence>
<evidence type="ECO:0000303" key="5">
    <source>
    </source>
</evidence>
<proteinExistence type="evidence at protein level"/>
<comment type="function">
    <text evidence="3 4">Endo-1,4-beta-xylanase involved in the hydrolysis of xylan, a major structural heterogeneous polysaccharide found in plant biomass representing the second most abundant polysaccharide in the biosphere, after cellulose (PubMed:27171788, PubMed:29740799). Efficiently hydrolyzes different xylans including beechwood xylan, birchwood xylan, or oat spelt xylanand; as well as xylo-oligosaccharides (XOS) except xylobiose (PubMed:29740799). Xylotriose, xylobiose, and some longer XOS were the main hydrolytic products (PubMed:29740799). Xyn also partially degrades xylotriose to xylobiose and xylose, and the longer XOS (X4 to X6) are also efficiently hydrolyzed (PubMed:29740799). Also produces feruloylated oligosaccharides (FOs) from wheat bran (PubMed:27171788, PubMed:29740799).</text>
</comment>
<comment type="catalytic activity">
    <reaction evidence="4">
        <text>Endohydrolysis of (1-&gt;4)-beta-D-xylosidic linkages in xylans.</text>
        <dbReference type="EC" id="3.2.1.8"/>
    </reaction>
</comment>
<comment type="activity regulation">
    <text evidence="4">Divalent cations such as Ca(2+), Zn(2+), Mg(2+), Cu(2+), Co(2+), or Ni(2+) at a high concentration (5 mM) slightly decrease the catalytic activity. Fe(3+) shows strong repression. EDTA and SDS also inhibit the activity.</text>
</comment>
<comment type="biophysicochemical properties">
    <phDependence>
        <text evidence="4">Optimum pH is 5.0.</text>
    </phDependence>
    <temperatureDependence>
        <text evidence="4">Optimum temperature is 55 degrees Celsius.</text>
    </temperatureDependence>
</comment>
<comment type="pathway">
    <text evidence="4">Glycan degradation; xylan degradation.</text>
</comment>
<comment type="subcellular location">
    <subcellularLocation>
        <location evidence="4">Secreted</location>
    </subcellularLocation>
</comment>
<comment type="biotechnology">
    <text evidence="4">Thermotolerant xylanases have many advantages in industrial applications including higher specific activity (lower cost of enzyme), increment of substrate and product solubility, and decrement of microbial contamination. XYN3 provides a potential way for industrial preparations of feruloylated oligosaccharides (FOs) or xylo-oligosaccharides (XOS) from biomass. Synergistic reactions with other polysaccharadide degrading enzymes are important for industrial applications.</text>
</comment>
<comment type="similarity">
    <text evidence="2">Belongs to the glycosyl hydrolase 11 (cellulase G) family.</text>
</comment>